<reference key="1">
    <citation type="journal article" date="2005" name="J. Bacteriol.">
        <title>Swine and poultry pathogens: the complete genome sequences of two strains of Mycoplasma hyopneumoniae and a strain of Mycoplasma synoviae.</title>
        <authorList>
            <person name="Vasconcelos A.T.R."/>
            <person name="Ferreira H.B."/>
            <person name="Bizarro C.V."/>
            <person name="Bonatto S.L."/>
            <person name="Carvalho M.O."/>
            <person name="Pinto P.M."/>
            <person name="Almeida D.F."/>
            <person name="Almeida L.G.P."/>
            <person name="Almeida R."/>
            <person name="Alves-Junior L."/>
            <person name="Assuncao E.N."/>
            <person name="Azevedo V.A.C."/>
            <person name="Bogo M.R."/>
            <person name="Brigido M.M."/>
            <person name="Brocchi M."/>
            <person name="Burity H.A."/>
            <person name="Camargo A.A."/>
            <person name="Camargo S.S."/>
            <person name="Carepo M.S."/>
            <person name="Carraro D.M."/>
            <person name="de Mattos Cascardo J.C."/>
            <person name="Castro L.A."/>
            <person name="Cavalcanti G."/>
            <person name="Chemale G."/>
            <person name="Collevatti R.G."/>
            <person name="Cunha C.W."/>
            <person name="Dallagiovanna B."/>
            <person name="Dambros B.P."/>
            <person name="Dellagostin O.A."/>
            <person name="Falcao C."/>
            <person name="Fantinatti-Garboggini F."/>
            <person name="Felipe M.S.S."/>
            <person name="Fiorentin L."/>
            <person name="Franco G.R."/>
            <person name="Freitas N.S.A."/>
            <person name="Frias D."/>
            <person name="Grangeiro T.B."/>
            <person name="Grisard E.C."/>
            <person name="Guimaraes C.T."/>
            <person name="Hungria M."/>
            <person name="Jardim S.N."/>
            <person name="Krieger M.A."/>
            <person name="Laurino J.P."/>
            <person name="Lima L.F.A."/>
            <person name="Lopes M.I."/>
            <person name="Loreto E.L.S."/>
            <person name="Madeira H.M.F."/>
            <person name="Manfio G.P."/>
            <person name="Maranhao A.Q."/>
            <person name="Martinkovics C.T."/>
            <person name="Medeiros S.R.B."/>
            <person name="Moreira M.A.M."/>
            <person name="Neiva M."/>
            <person name="Ramalho-Neto C.E."/>
            <person name="Nicolas M.F."/>
            <person name="Oliveira S.C."/>
            <person name="Paixao R.F.C."/>
            <person name="Pedrosa F.O."/>
            <person name="Pena S.D.J."/>
            <person name="Pereira M."/>
            <person name="Pereira-Ferrari L."/>
            <person name="Piffer I."/>
            <person name="Pinto L.S."/>
            <person name="Potrich D.P."/>
            <person name="Salim A.C.M."/>
            <person name="Santos F.R."/>
            <person name="Schmitt R."/>
            <person name="Schneider M.P.C."/>
            <person name="Schrank A."/>
            <person name="Schrank I.S."/>
            <person name="Schuck A.F."/>
            <person name="Seuanez H.N."/>
            <person name="Silva D.W."/>
            <person name="Silva R."/>
            <person name="Silva S.C."/>
            <person name="Soares C.M.A."/>
            <person name="Souza K.R.L."/>
            <person name="Souza R.C."/>
            <person name="Staats C.C."/>
            <person name="Steffens M.B.R."/>
            <person name="Teixeira S.M.R."/>
            <person name="Urmenyi T.P."/>
            <person name="Vainstein M.H."/>
            <person name="Zuccherato L.W."/>
            <person name="Simpson A.J.G."/>
            <person name="Zaha A."/>
        </authorList>
    </citation>
    <scope>NUCLEOTIDE SEQUENCE [LARGE SCALE GENOMIC DNA]</scope>
    <source>
        <strain>7448</strain>
    </source>
</reference>
<sequence length="121" mass="12952">MAKITKEQFIESLKEMTIKEVMELVDALKEEFGVDPSAVAVAATPVATEEVKTEVKLTLKAAGQQKVAVIKVVKDLLGLSLMDAKKLVDAAPSVLKEAIKPEEAEEYKAKLVAAGAEVSID</sequence>
<organism>
    <name type="scientific">Mesomycoplasma hyopneumoniae (strain 7448)</name>
    <name type="common">Mycoplasma hyopneumoniae</name>
    <dbReference type="NCBI Taxonomy" id="262722"/>
    <lineage>
        <taxon>Bacteria</taxon>
        <taxon>Bacillati</taxon>
        <taxon>Mycoplasmatota</taxon>
        <taxon>Mycoplasmoidales</taxon>
        <taxon>Metamycoplasmataceae</taxon>
        <taxon>Mesomycoplasma</taxon>
    </lineage>
</organism>
<comment type="function">
    <text evidence="1">Forms part of the ribosomal stalk which helps the ribosome interact with GTP-bound translation factors. Is thus essential for accurate translation.</text>
</comment>
<comment type="subunit">
    <text evidence="1">Homodimer. Part of the ribosomal stalk of the 50S ribosomal subunit. Forms a multimeric L10(L12)X complex, where L10 forms an elongated spine to which 2 to 4 L12 dimers bind in a sequential fashion. Binds GTP-bound translation factors.</text>
</comment>
<comment type="similarity">
    <text evidence="1">Belongs to the bacterial ribosomal protein bL12 family.</text>
</comment>
<dbReference type="EMBL" id="AE017244">
    <property type="protein sequence ID" value="AAZ53981.1"/>
    <property type="molecule type" value="Genomic_DNA"/>
</dbReference>
<dbReference type="RefSeq" id="WP_011290401.1">
    <property type="nucleotide sequence ID" value="NC_007332.1"/>
</dbReference>
<dbReference type="SMR" id="Q4A7A8"/>
<dbReference type="KEGG" id="mhp:MHP7448_0618"/>
<dbReference type="HOGENOM" id="CLU_086499_3_2_14"/>
<dbReference type="Proteomes" id="UP000000553">
    <property type="component" value="Chromosome"/>
</dbReference>
<dbReference type="GO" id="GO:0022625">
    <property type="term" value="C:cytosolic large ribosomal subunit"/>
    <property type="evidence" value="ECO:0007669"/>
    <property type="project" value="TreeGrafter"/>
</dbReference>
<dbReference type="GO" id="GO:0003729">
    <property type="term" value="F:mRNA binding"/>
    <property type="evidence" value="ECO:0007669"/>
    <property type="project" value="TreeGrafter"/>
</dbReference>
<dbReference type="GO" id="GO:0003735">
    <property type="term" value="F:structural constituent of ribosome"/>
    <property type="evidence" value="ECO:0007669"/>
    <property type="project" value="InterPro"/>
</dbReference>
<dbReference type="GO" id="GO:0006412">
    <property type="term" value="P:translation"/>
    <property type="evidence" value="ECO:0007669"/>
    <property type="project" value="UniProtKB-UniRule"/>
</dbReference>
<dbReference type="CDD" id="cd00387">
    <property type="entry name" value="Ribosomal_L7_L12"/>
    <property type="match status" value="1"/>
</dbReference>
<dbReference type="FunFam" id="3.30.1390.10:FF:000001">
    <property type="entry name" value="50S ribosomal protein L7/L12"/>
    <property type="match status" value="1"/>
</dbReference>
<dbReference type="Gene3D" id="3.30.1390.10">
    <property type="match status" value="1"/>
</dbReference>
<dbReference type="Gene3D" id="1.20.5.710">
    <property type="entry name" value="Single helix bin"/>
    <property type="match status" value="1"/>
</dbReference>
<dbReference type="HAMAP" id="MF_00368">
    <property type="entry name" value="Ribosomal_bL12"/>
    <property type="match status" value="1"/>
</dbReference>
<dbReference type="InterPro" id="IPR000206">
    <property type="entry name" value="Ribosomal_bL12"/>
</dbReference>
<dbReference type="InterPro" id="IPR013823">
    <property type="entry name" value="Ribosomal_bL12_C"/>
</dbReference>
<dbReference type="InterPro" id="IPR014719">
    <property type="entry name" value="Ribosomal_bL12_C/ClpS-like"/>
</dbReference>
<dbReference type="InterPro" id="IPR008932">
    <property type="entry name" value="Ribosomal_bL12_oligo"/>
</dbReference>
<dbReference type="InterPro" id="IPR036235">
    <property type="entry name" value="Ribosomal_bL12_oligo_N_sf"/>
</dbReference>
<dbReference type="NCBIfam" id="TIGR00855">
    <property type="entry name" value="L12"/>
    <property type="match status" value="1"/>
</dbReference>
<dbReference type="PANTHER" id="PTHR45987">
    <property type="entry name" value="39S RIBOSOMAL PROTEIN L12"/>
    <property type="match status" value="1"/>
</dbReference>
<dbReference type="PANTHER" id="PTHR45987:SF4">
    <property type="entry name" value="LARGE RIBOSOMAL SUBUNIT PROTEIN BL12M"/>
    <property type="match status" value="1"/>
</dbReference>
<dbReference type="Pfam" id="PF00542">
    <property type="entry name" value="Ribosomal_L12"/>
    <property type="match status" value="1"/>
</dbReference>
<dbReference type="Pfam" id="PF16320">
    <property type="entry name" value="Ribosomal_L12_N"/>
    <property type="match status" value="1"/>
</dbReference>
<dbReference type="SUPFAM" id="SSF54736">
    <property type="entry name" value="ClpS-like"/>
    <property type="match status" value="1"/>
</dbReference>
<dbReference type="SUPFAM" id="SSF48300">
    <property type="entry name" value="Ribosomal protein L7/12, oligomerisation (N-terminal) domain"/>
    <property type="match status" value="1"/>
</dbReference>
<proteinExistence type="inferred from homology"/>
<keyword id="KW-0687">Ribonucleoprotein</keyword>
<keyword id="KW-0689">Ribosomal protein</keyword>
<gene>
    <name evidence="1" type="primary">rplL</name>
    <name type="ordered locus">MHP7448_0618</name>
</gene>
<evidence type="ECO:0000255" key="1">
    <source>
        <dbReference type="HAMAP-Rule" id="MF_00368"/>
    </source>
</evidence>
<evidence type="ECO:0000305" key="2"/>
<feature type="chain" id="PRO_1000195813" description="Large ribosomal subunit protein bL12">
    <location>
        <begin position="1"/>
        <end position="121"/>
    </location>
</feature>
<accession>Q4A7A8</accession>
<name>RL7_MESH7</name>
<protein>
    <recommendedName>
        <fullName evidence="1">Large ribosomal subunit protein bL12</fullName>
    </recommendedName>
    <alternativeName>
        <fullName evidence="2">50S ribosomal protein L7/L12</fullName>
    </alternativeName>
</protein>